<name>SSB_BPB03</name>
<gene>
    <name type="primary">5</name>
    <name type="synonym">5A</name>
</gene>
<sequence>MTNEIKATFDVTTLEGRMKILNAKNAGGASLKTCVDGTIIEAVGIAQYQQESDTYGDMKEETVTAIFTADGDVISAISKTVAEAATEIIDLVKEFNLDTFKVKVSKQKSSKGNEFFSLLLVG</sequence>
<comment type="function">
    <text evidence="1">Single-stranded DNA binding protein required for the elongation during viral DNA replication by strand displacement. Displaced viral DNA strands are transiently coated with the ssDNA-binding protein and therefore protected againt nucleases. The latter is then probably removed by the replisome that performs lagging strand synthesis or during the events that lead up to the recombination process. Has helix-destabilizing activity since it removes secondary structure from the ssDNA in replicative intermediates.</text>
</comment>
<comment type="subunit">
    <text evidence="1">Monomer.</text>
</comment>
<comment type="similarity">
    <text evidence="2">Belongs to the phi29likevirus single-strand-binding protein family.</text>
</comment>
<reference key="1">
    <citation type="journal article" date="1997" name="Gene">
        <title>Bacteriophage B103: complete DNA sequence of its genome and relationship to other Bacillus phages.</title>
        <authorList>
            <person name="Pecenkova T."/>
            <person name="Benes V."/>
            <person name="Paces J."/>
            <person name="Vlcek C."/>
            <person name="Paces V."/>
        </authorList>
    </citation>
    <scope>NUCLEOTIDE SEQUENCE [LARGE SCALE GENOMIC DNA]</scope>
</reference>
<accession>Q37885</accession>
<dbReference type="EMBL" id="X99260">
    <property type="protein sequence ID" value="CAA67652.1"/>
    <property type="molecule type" value="Genomic_DNA"/>
</dbReference>
<dbReference type="RefSeq" id="NP_690638.1">
    <property type="nucleotide sequence ID" value="NC_004165.1"/>
</dbReference>
<dbReference type="KEGG" id="vg:955373"/>
<dbReference type="Proteomes" id="UP000000971">
    <property type="component" value="Segment"/>
</dbReference>
<dbReference type="GO" id="GO:0003677">
    <property type="term" value="F:DNA binding"/>
    <property type="evidence" value="ECO:0007669"/>
    <property type="project" value="UniProtKB-KW"/>
</dbReference>
<dbReference type="GO" id="GO:0006260">
    <property type="term" value="P:DNA replication"/>
    <property type="evidence" value="ECO:0007669"/>
    <property type="project" value="UniProtKB-KW"/>
</dbReference>
<dbReference type="GO" id="GO:0039693">
    <property type="term" value="P:viral DNA genome replication"/>
    <property type="evidence" value="ECO:0007669"/>
    <property type="project" value="UniProtKB-KW"/>
</dbReference>
<dbReference type="InterPro" id="IPR035408">
    <property type="entry name" value="Phi29_Phage_SSB"/>
</dbReference>
<dbReference type="Pfam" id="PF17427">
    <property type="entry name" value="Phi29_Phage_SSB"/>
    <property type="match status" value="1"/>
</dbReference>
<proteinExistence type="inferred from homology"/>
<feature type="chain" id="PRO_0000106562" description="Single-stranded DNA-binding protein">
    <location>
        <begin position="1"/>
        <end position="122"/>
    </location>
</feature>
<organismHost>
    <name type="scientific">Bacillus subtilis</name>
    <dbReference type="NCBI Taxonomy" id="1423"/>
</organismHost>
<evidence type="ECO:0000250" key="1">
    <source>
        <dbReference type="UniProtKB" id="Q38504"/>
    </source>
</evidence>
<evidence type="ECO:0000305" key="2"/>
<keyword id="KW-0235">DNA replication</keyword>
<keyword id="KW-0238">DNA-binding</keyword>
<keyword id="KW-0244">Early protein</keyword>
<keyword id="KW-1194">Viral DNA replication</keyword>
<organism>
    <name type="scientific">Bacillus phage B103</name>
    <name type="common">Bacteriophage B103</name>
    <dbReference type="NCBI Taxonomy" id="2994042"/>
    <lineage>
        <taxon>Viruses</taxon>
        <taxon>Duplodnaviria</taxon>
        <taxon>Heunggongvirae</taxon>
        <taxon>Uroviricota</taxon>
        <taxon>Caudoviricetes</taxon>
        <taxon>Salasmaviridae</taxon>
        <taxon>Picovirinae</taxon>
        <taxon>Beecentumtrevirus</taxon>
        <taxon>Beecentumtrevirus B103</taxon>
    </lineage>
</organism>
<protein>
    <recommendedName>
        <fullName evidence="1">Single-stranded DNA-binding protein</fullName>
        <shortName evidence="1">SSB</shortName>
    </recommendedName>
    <alternativeName>
        <fullName evidence="1">Gene product 5</fullName>
        <shortName evidence="1">gp5</shortName>
    </alternativeName>
    <alternativeName>
        <fullName evidence="1">Protein p5</fullName>
    </alternativeName>
</protein>